<evidence type="ECO:0000250" key="1"/>
<evidence type="ECO:0000255" key="2">
    <source>
        <dbReference type="PROSITE-ProRule" id="PRU00723"/>
    </source>
</evidence>
<evidence type="ECO:0000256" key="3">
    <source>
        <dbReference type="SAM" id="MobiDB-lite"/>
    </source>
</evidence>
<evidence type="ECO:0000305" key="4"/>
<organism>
    <name type="scientific">Arabidopsis thaliana</name>
    <name type="common">Mouse-ear cress</name>
    <dbReference type="NCBI Taxonomy" id="3702"/>
    <lineage>
        <taxon>Eukaryota</taxon>
        <taxon>Viridiplantae</taxon>
        <taxon>Streptophyta</taxon>
        <taxon>Embryophyta</taxon>
        <taxon>Tracheophyta</taxon>
        <taxon>Spermatophyta</taxon>
        <taxon>Magnoliopsida</taxon>
        <taxon>eudicotyledons</taxon>
        <taxon>Gunneridae</taxon>
        <taxon>Pentapetalae</taxon>
        <taxon>rosids</taxon>
        <taxon>malvids</taxon>
        <taxon>Brassicales</taxon>
        <taxon>Brassicaceae</taxon>
        <taxon>Camelineae</taxon>
        <taxon>Arabidopsis</taxon>
    </lineage>
</organism>
<accession>Q8GXX7</accession>
<accession>Q1EBW8</accession>
<accession>Q9M8S4</accession>
<accession>Q9XFB8</accession>
<protein>
    <recommendedName>
        <fullName>Zinc finger CCCH domain-containing protein 33</fullName>
        <shortName>AtC3H33</shortName>
    </recommendedName>
    <alternativeName>
        <fullName>Zinc finger CCCH domain-containing protein ZFN1</fullName>
    </alternativeName>
</protein>
<dbReference type="EMBL" id="AF138743">
    <property type="protein sequence ID" value="AAD33769.1"/>
    <property type="status" value="ALT_FRAME"/>
    <property type="molecule type" value="mRNA"/>
</dbReference>
<dbReference type="EMBL" id="AC018363">
    <property type="protein sequence ID" value="AAF26977.1"/>
    <property type="status" value="ALT_SEQ"/>
    <property type="molecule type" value="Genomic_DNA"/>
</dbReference>
<dbReference type="EMBL" id="CP002686">
    <property type="protein sequence ID" value="AEE73864.1"/>
    <property type="molecule type" value="Genomic_DNA"/>
</dbReference>
<dbReference type="EMBL" id="AK117978">
    <property type="protein sequence ID" value="BAC42614.1"/>
    <property type="molecule type" value="mRNA"/>
</dbReference>
<dbReference type="EMBL" id="BT025966">
    <property type="protein sequence ID" value="ABG25055.1"/>
    <property type="molecule type" value="mRNA"/>
</dbReference>
<dbReference type="PIR" id="T48874">
    <property type="entry name" value="T48874"/>
</dbReference>
<dbReference type="RefSeq" id="NP_001325699.1">
    <property type="nucleotide sequence ID" value="NM_001337436.1"/>
</dbReference>
<dbReference type="RefSeq" id="NP_566183.1">
    <property type="nucleotide sequence ID" value="NM_111151.5"/>
</dbReference>
<dbReference type="BioGRID" id="6563">
    <property type="interactions" value="3"/>
</dbReference>
<dbReference type="DIP" id="DIP-60324N"/>
<dbReference type="FunCoup" id="Q8GXX7">
    <property type="interactions" value="396"/>
</dbReference>
<dbReference type="IntAct" id="Q8GXX7">
    <property type="interactions" value="3"/>
</dbReference>
<dbReference type="STRING" id="3702.Q8GXX7"/>
<dbReference type="GlyGen" id="Q8GXX7">
    <property type="glycosylation" value="2 sites, 1 O-linked glycan (2 sites)"/>
</dbReference>
<dbReference type="iPTMnet" id="Q8GXX7"/>
<dbReference type="PaxDb" id="3702-AT3G02830.1"/>
<dbReference type="ProteomicsDB" id="239081"/>
<dbReference type="EnsemblPlants" id="AT3G02830.1">
    <property type="protein sequence ID" value="AT3G02830.1"/>
    <property type="gene ID" value="AT3G02830"/>
</dbReference>
<dbReference type="GeneID" id="821230"/>
<dbReference type="Gramene" id="AT3G02830.1">
    <property type="protein sequence ID" value="AT3G02830.1"/>
    <property type="gene ID" value="AT3G02830"/>
</dbReference>
<dbReference type="KEGG" id="ath:AT3G02830"/>
<dbReference type="Araport" id="AT3G02830"/>
<dbReference type="TAIR" id="AT3G02830">
    <property type="gene designation" value="ZFN1"/>
</dbReference>
<dbReference type="eggNOG" id="KOG1677">
    <property type="taxonomic scope" value="Eukaryota"/>
</dbReference>
<dbReference type="HOGENOM" id="CLU_033292_2_1_1"/>
<dbReference type="InParanoid" id="Q8GXX7"/>
<dbReference type="OMA" id="SECAYYM"/>
<dbReference type="OrthoDB" id="411372at2759"/>
<dbReference type="PhylomeDB" id="Q8GXX7"/>
<dbReference type="PRO" id="PR:Q8GXX7"/>
<dbReference type="Proteomes" id="UP000006548">
    <property type="component" value="Chromosome 3"/>
</dbReference>
<dbReference type="ExpressionAtlas" id="Q8GXX7">
    <property type="expression patterns" value="baseline and differential"/>
</dbReference>
<dbReference type="GO" id="GO:0005829">
    <property type="term" value="C:cytosol"/>
    <property type="evidence" value="ECO:0000314"/>
    <property type="project" value="TAIR"/>
</dbReference>
<dbReference type="GO" id="GO:0005634">
    <property type="term" value="C:nucleus"/>
    <property type="evidence" value="ECO:0007669"/>
    <property type="project" value="UniProtKB-SubCell"/>
</dbReference>
<dbReference type="GO" id="GO:0003677">
    <property type="term" value="F:DNA binding"/>
    <property type="evidence" value="ECO:0000304"/>
    <property type="project" value="TAIR"/>
</dbReference>
<dbReference type="GO" id="GO:0048027">
    <property type="term" value="F:mRNA 5'-UTR binding"/>
    <property type="evidence" value="ECO:0000353"/>
    <property type="project" value="TAIR"/>
</dbReference>
<dbReference type="GO" id="GO:0003729">
    <property type="term" value="F:mRNA binding"/>
    <property type="evidence" value="ECO:0000314"/>
    <property type="project" value="TAIR"/>
</dbReference>
<dbReference type="GO" id="GO:0004518">
    <property type="term" value="F:nuclease activity"/>
    <property type="evidence" value="ECO:0000304"/>
    <property type="project" value="TAIR"/>
</dbReference>
<dbReference type="GO" id="GO:0010313">
    <property type="term" value="F:phytochrome binding"/>
    <property type="evidence" value="ECO:0000353"/>
    <property type="project" value="TAIR"/>
</dbReference>
<dbReference type="GO" id="GO:0008270">
    <property type="term" value="F:zinc ion binding"/>
    <property type="evidence" value="ECO:0007669"/>
    <property type="project" value="UniProtKB-KW"/>
</dbReference>
<dbReference type="GO" id="GO:0017148">
    <property type="term" value="P:negative regulation of translation"/>
    <property type="evidence" value="ECO:0000315"/>
    <property type="project" value="TAIR"/>
</dbReference>
<dbReference type="FunFam" id="4.10.1000.10:FF:000030">
    <property type="entry name" value="CCCH type zinc finger protein"/>
    <property type="match status" value="1"/>
</dbReference>
<dbReference type="FunFam" id="4.10.1000.10:FF:000028">
    <property type="entry name" value="Zinc finger nuclease 2"/>
    <property type="match status" value="1"/>
</dbReference>
<dbReference type="Gene3D" id="4.10.1000.10">
    <property type="entry name" value="Zinc finger, CCCH-type"/>
    <property type="match status" value="3"/>
</dbReference>
<dbReference type="InterPro" id="IPR050974">
    <property type="entry name" value="Plant_ZF_CCCH"/>
</dbReference>
<dbReference type="InterPro" id="IPR000571">
    <property type="entry name" value="Znf_CCCH"/>
</dbReference>
<dbReference type="InterPro" id="IPR036855">
    <property type="entry name" value="Znf_CCCH_sf"/>
</dbReference>
<dbReference type="PANTHER" id="PTHR12506">
    <property type="entry name" value="PROTEIN PHOSPHATASE RELATED"/>
    <property type="match status" value="1"/>
</dbReference>
<dbReference type="PANTHER" id="PTHR12506:SF18">
    <property type="entry name" value="ZINC FINGER CCCH DOMAIN-CONTAINING PROTEIN 33-RELATED"/>
    <property type="match status" value="1"/>
</dbReference>
<dbReference type="Pfam" id="PF00642">
    <property type="entry name" value="zf-CCCH"/>
    <property type="match status" value="5"/>
</dbReference>
<dbReference type="SMART" id="SM00356">
    <property type="entry name" value="ZnF_C3H1"/>
    <property type="match status" value="5"/>
</dbReference>
<dbReference type="SUPFAM" id="SSF90229">
    <property type="entry name" value="CCCH zinc finger"/>
    <property type="match status" value="5"/>
</dbReference>
<dbReference type="PROSITE" id="PS50103">
    <property type="entry name" value="ZF_C3H1"/>
    <property type="match status" value="5"/>
</dbReference>
<keyword id="KW-0238">DNA-binding</keyword>
<keyword id="KW-0479">Metal-binding</keyword>
<keyword id="KW-0539">Nucleus</keyword>
<keyword id="KW-1185">Reference proteome</keyword>
<keyword id="KW-0677">Repeat</keyword>
<keyword id="KW-0862">Zinc</keyword>
<keyword id="KW-0863">Zinc-finger</keyword>
<name>C3H33_ARATH</name>
<sequence length="397" mass="44181">MDFNAGVPMSSLSPLMNQDAMWQMNLSSDETMETGSYPERPGEPDCSYYIRTGLCRFGSTCRFNHPRDRELVIATARMRGEYPERIGQPECEYYLKTGTCKFGVTCKFHHPRNKAGIAGRVSLNMLGYPLRSNEVDCAYFLRTGHCKFGGTCKFNHPQPQPTNMMVPTSGQQSYPWSRASFIASPRWQDPSSYASLIMPQGVVPVQGWNPYSGQLGSVSPSGTGNDQNYRNLQQNETIESGSQSQGSFSGYNPGSSVPLGGYYALPRENVFPERPGQPECQFYMKTGDCKFGTVCKFHHPRDRQAPPPDCLLSSIGLPLRPGEPLCVFYTRYGICKFGPSCKFDHPMRVFTYDNTASETDEVVETSTGKSRRLSVSETRQAATTSSGKDTTIDNTQQ</sequence>
<reference key="1">
    <citation type="submission" date="1999-03" db="EMBL/GenBank/DDBJ databases">
        <title>Characterization of four zinger finger proteins in Arabidopsis.</title>
        <authorList>
            <person name="Choi S."/>
            <person name="Lee J."/>
            <person name="Yi H."/>
            <person name="Shin B."/>
            <person name="Choi G."/>
        </authorList>
    </citation>
    <scope>NUCLEOTIDE SEQUENCE [MRNA]</scope>
    <source>
        <strain>cv. Columbia</strain>
    </source>
</reference>
<reference key="2">
    <citation type="journal article" date="2000" name="Nature">
        <title>Sequence and analysis of chromosome 3 of the plant Arabidopsis thaliana.</title>
        <authorList>
            <person name="Salanoubat M."/>
            <person name="Lemcke K."/>
            <person name="Rieger M."/>
            <person name="Ansorge W."/>
            <person name="Unseld M."/>
            <person name="Fartmann B."/>
            <person name="Valle G."/>
            <person name="Bloecker H."/>
            <person name="Perez-Alonso M."/>
            <person name="Obermaier B."/>
            <person name="Delseny M."/>
            <person name="Boutry M."/>
            <person name="Grivell L.A."/>
            <person name="Mache R."/>
            <person name="Puigdomenech P."/>
            <person name="De Simone V."/>
            <person name="Choisne N."/>
            <person name="Artiguenave F."/>
            <person name="Robert C."/>
            <person name="Brottier P."/>
            <person name="Wincker P."/>
            <person name="Cattolico L."/>
            <person name="Weissenbach J."/>
            <person name="Saurin W."/>
            <person name="Quetier F."/>
            <person name="Schaefer M."/>
            <person name="Mueller-Auer S."/>
            <person name="Gabel C."/>
            <person name="Fuchs M."/>
            <person name="Benes V."/>
            <person name="Wurmbach E."/>
            <person name="Drzonek H."/>
            <person name="Erfle H."/>
            <person name="Jordan N."/>
            <person name="Bangert S."/>
            <person name="Wiedelmann R."/>
            <person name="Kranz H."/>
            <person name="Voss H."/>
            <person name="Holland R."/>
            <person name="Brandt P."/>
            <person name="Nyakatura G."/>
            <person name="Vezzi A."/>
            <person name="D'Angelo M."/>
            <person name="Pallavicini A."/>
            <person name="Toppo S."/>
            <person name="Simionati B."/>
            <person name="Conrad A."/>
            <person name="Hornischer K."/>
            <person name="Kauer G."/>
            <person name="Loehnert T.-H."/>
            <person name="Nordsiek G."/>
            <person name="Reichelt J."/>
            <person name="Scharfe M."/>
            <person name="Schoen O."/>
            <person name="Bargues M."/>
            <person name="Terol J."/>
            <person name="Climent J."/>
            <person name="Navarro P."/>
            <person name="Collado C."/>
            <person name="Perez-Perez A."/>
            <person name="Ottenwaelder B."/>
            <person name="Duchemin D."/>
            <person name="Cooke R."/>
            <person name="Laudie M."/>
            <person name="Berger-Llauro C."/>
            <person name="Purnelle B."/>
            <person name="Masuy D."/>
            <person name="de Haan M."/>
            <person name="Maarse A.C."/>
            <person name="Alcaraz J.-P."/>
            <person name="Cottet A."/>
            <person name="Casacuberta E."/>
            <person name="Monfort A."/>
            <person name="Argiriou A."/>
            <person name="Flores M."/>
            <person name="Liguori R."/>
            <person name="Vitale D."/>
            <person name="Mannhaupt G."/>
            <person name="Haase D."/>
            <person name="Schoof H."/>
            <person name="Rudd S."/>
            <person name="Zaccaria P."/>
            <person name="Mewes H.-W."/>
            <person name="Mayer K.F.X."/>
            <person name="Kaul S."/>
            <person name="Town C.D."/>
            <person name="Koo H.L."/>
            <person name="Tallon L.J."/>
            <person name="Jenkins J."/>
            <person name="Rooney T."/>
            <person name="Rizzo M."/>
            <person name="Walts A."/>
            <person name="Utterback T."/>
            <person name="Fujii C.Y."/>
            <person name="Shea T.P."/>
            <person name="Creasy T.H."/>
            <person name="Haas B."/>
            <person name="Maiti R."/>
            <person name="Wu D."/>
            <person name="Peterson J."/>
            <person name="Van Aken S."/>
            <person name="Pai G."/>
            <person name="Militscher J."/>
            <person name="Sellers P."/>
            <person name="Gill J.E."/>
            <person name="Feldblyum T.V."/>
            <person name="Preuss D."/>
            <person name="Lin X."/>
            <person name="Nierman W.C."/>
            <person name="Salzberg S.L."/>
            <person name="White O."/>
            <person name="Venter J.C."/>
            <person name="Fraser C.M."/>
            <person name="Kaneko T."/>
            <person name="Nakamura Y."/>
            <person name="Sato S."/>
            <person name="Kato T."/>
            <person name="Asamizu E."/>
            <person name="Sasamoto S."/>
            <person name="Kimura T."/>
            <person name="Idesawa K."/>
            <person name="Kawashima K."/>
            <person name="Kishida Y."/>
            <person name="Kiyokawa C."/>
            <person name="Kohara M."/>
            <person name="Matsumoto M."/>
            <person name="Matsuno A."/>
            <person name="Muraki A."/>
            <person name="Nakayama S."/>
            <person name="Nakazaki N."/>
            <person name="Shinpo S."/>
            <person name="Takeuchi C."/>
            <person name="Wada T."/>
            <person name="Watanabe A."/>
            <person name="Yamada M."/>
            <person name="Yasuda M."/>
            <person name="Tabata S."/>
        </authorList>
    </citation>
    <scope>NUCLEOTIDE SEQUENCE [LARGE SCALE GENOMIC DNA]</scope>
    <source>
        <strain>cv. Columbia</strain>
    </source>
</reference>
<reference key="3">
    <citation type="journal article" date="2017" name="Plant J.">
        <title>Araport11: a complete reannotation of the Arabidopsis thaliana reference genome.</title>
        <authorList>
            <person name="Cheng C.Y."/>
            <person name="Krishnakumar V."/>
            <person name="Chan A.P."/>
            <person name="Thibaud-Nissen F."/>
            <person name="Schobel S."/>
            <person name="Town C.D."/>
        </authorList>
    </citation>
    <scope>GENOME REANNOTATION</scope>
    <source>
        <strain>cv. Columbia</strain>
    </source>
</reference>
<reference key="4">
    <citation type="journal article" date="2002" name="Science">
        <title>Functional annotation of a full-length Arabidopsis cDNA collection.</title>
        <authorList>
            <person name="Seki M."/>
            <person name="Narusaka M."/>
            <person name="Kamiya A."/>
            <person name="Ishida J."/>
            <person name="Satou M."/>
            <person name="Sakurai T."/>
            <person name="Nakajima M."/>
            <person name="Enju A."/>
            <person name="Akiyama K."/>
            <person name="Oono Y."/>
            <person name="Muramatsu M."/>
            <person name="Hayashizaki Y."/>
            <person name="Kawai J."/>
            <person name="Carninci P."/>
            <person name="Itoh M."/>
            <person name="Ishii Y."/>
            <person name="Arakawa T."/>
            <person name="Shibata K."/>
            <person name="Shinagawa A."/>
            <person name="Shinozaki K."/>
        </authorList>
    </citation>
    <scope>NUCLEOTIDE SEQUENCE [LARGE SCALE MRNA]</scope>
    <source>
        <strain>cv. Columbia</strain>
    </source>
</reference>
<reference key="5">
    <citation type="submission" date="2006-06" db="EMBL/GenBank/DDBJ databases">
        <title>Arabidopsis ORF clones.</title>
        <authorList>
            <person name="Shinn P."/>
            <person name="Chen H."/>
            <person name="Kim C.J."/>
            <person name="Quinitio C."/>
            <person name="Ecker J.R."/>
        </authorList>
    </citation>
    <scope>NUCLEOTIDE SEQUENCE [LARGE SCALE MRNA]</scope>
    <source>
        <strain>cv. Columbia</strain>
    </source>
</reference>
<reference key="6">
    <citation type="journal article" date="2008" name="BMC Genomics">
        <title>Genome-wide analysis of CCCH zinc finger family in Arabidopsis and rice.</title>
        <authorList>
            <person name="Wang D."/>
            <person name="Guo Y."/>
            <person name="Wu C."/>
            <person name="Yang G."/>
            <person name="Li Y."/>
            <person name="Zheng C."/>
        </authorList>
    </citation>
    <scope>NOMENCLATURE</scope>
</reference>
<reference key="7">
    <citation type="journal article" date="2009" name="Plant Physiol.">
        <title>Large-scale Arabidopsis phosphoproteome profiling reveals novel chloroplast kinase substrates and phosphorylation networks.</title>
        <authorList>
            <person name="Reiland S."/>
            <person name="Messerli G."/>
            <person name="Baerenfaller K."/>
            <person name="Gerrits B."/>
            <person name="Endler A."/>
            <person name="Grossmann J."/>
            <person name="Gruissem W."/>
            <person name="Baginsky S."/>
        </authorList>
    </citation>
    <scope>IDENTIFICATION BY MASS SPECTROMETRY [LARGE SCALE ANALYSIS]</scope>
</reference>
<gene>
    <name type="primary">ZFN1</name>
    <name type="ordered locus">At3g02830</name>
    <name type="ORF">F13E7.23</name>
</gene>
<proteinExistence type="evidence at protein level"/>
<feature type="chain" id="PRO_0000213912" description="Zinc finger CCCH domain-containing protein 33">
    <location>
        <begin position="1"/>
        <end position="397"/>
    </location>
</feature>
<feature type="zinc finger region" description="C3H1-type 1" evidence="2">
    <location>
        <begin position="40"/>
        <end position="68"/>
    </location>
</feature>
<feature type="zinc finger region" description="C3H1-type 2" evidence="2">
    <location>
        <begin position="85"/>
        <end position="113"/>
    </location>
</feature>
<feature type="zinc finger region" description="C3H1-type 3" evidence="2">
    <location>
        <begin position="131"/>
        <end position="159"/>
    </location>
</feature>
<feature type="zinc finger region" description="C3H1-type 4" evidence="2">
    <location>
        <begin position="274"/>
        <end position="302"/>
    </location>
</feature>
<feature type="zinc finger region" description="C3H1-type 5" evidence="2">
    <location>
        <begin position="320"/>
        <end position="348"/>
    </location>
</feature>
<feature type="region of interest" description="Disordered" evidence="3">
    <location>
        <begin position="361"/>
        <end position="397"/>
    </location>
</feature>
<feature type="compositionally biased region" description="Polar residues" evidence="3">
    <location>
        <begin position="364"/>
        <end position="397"/>
    </location>
</feature>
<feature type="sequence conflict" description="In Ref. 1; AAD33769." evidence="4" ref="1">
    <original>F</original>
    <variation>V</variation>
    <location>
        <position position="63"/>
    </location>
</feature>
<feature type="sequence conflict" description="In Ref. 1; AAD33769." evidence="4" ref="1">
    <original>Q</original>
    <variation>H</variation>
    <location>
        <position position="88"/>
    </location>
</feature>
<comment type="subcellular location">
    <subcellularLocation>
        <location evidence="1">Nucleus</location>
    </subcellularLocation>
</comment>
<comment type="sequence caution" evidence="4">
    <conflict type="frameshift">
        <sequence resource="EMBL-CDS" id="AAD33769"/>
    </conflict>
</comment>
<comment type="sequence caution" evidence="4">
    <conflict type="erroneous gene model prediction">
        <sequence resource="EMBL-CDS" id="AAF26977"/>
    </conflict>
</comment>